<comment type="function">
    <text evidence="1">RNA-binding component of the eukaryotic translation initiation factor 3 (eIF-3) complex, which is involved in protein synthesis of a specialized repertoire of mRNAs and, together with other initiation factors, stimulates binding of mRNA and methionyl-tRNAi to the 40S ribosome. The eIF-3 complex specifically targets and initiates translation of a subset of mRNAs involved in cell proliferation.</text>
</comment>
<comment type="subunit">
    <text evidence="1 3 4">Component of the eukaryotic translation initiation factor 3 (eIF-3) complex. The eIF-3 complex interacts with pix (PubMed:17392269). Interacts with mxt (PubMed:23716590).</text>
</comment>
<comment type="subcellular location">
    <subcellularLocation>
        <location evidence="1">Cytoplasm</location>
    </subcellularLocation>
</comment>
<comment type="similarity">
    <text evidence="1">Belongs to the eIF-3 subunit B family.</text>
</comment>
<proteinExistence type="evidence at protein level"/>
<keyword id="KW-0175">Coiled coil</keyword>
<keyword id="KW-0963">Cytoplasm</keyword>
<keyword id="KW-0396">Initiation factor</keyword>
<keyword id="KW-0648">Protein biosynthesis</keyword>
<keyword id="KW-1185">Reference proteome</keyword>
<keyword id="KW-0677">Repeat</keyword>
<keyword id="KW-0694">RNA-binding</keyword>
<keyword id="KW-0853">WD repeat</keyword>
<name>EIF3B_DROME</name>
<evidence type="ECO:0000255" key="1">
    <source>
        <dbReference type="HAMAP-Rule" id="MF_03001"/>
    </source>
</evidence>
<evidence type="ECO:0000256" key="2">
    <source>
        <dbReference type="SAM" id="MobiDB-lite"/>
    </source>
</evidence>
<evidence type="ECO:0000269" key="3">
    <source>
    </source>
</evidence>
<evidence type="ECO:0000269" key="4">
    <source>
    </source>
</evidence>
<evidence type="ECO:0000305" key="5"/>
<evidence type="ECO:0000312" key="6">
    <source>
        <dbReference type="FlyBase" id="FBgn0034237"/>
    </source>
</evidence>
<reference key="1">
    <citation type="journal article" date="2000" name="Science">
        <title>The genome sequence of Drosophila melanogaster.</title>
        <authorList>
            <person name="Adams M.D."/>
            <person name="Celniker S.E."/>
            <person name="Holt R.A."/>
            <person name="Evans C.A."/>
            <person name="Gocayne J.D."/>
            <person name="Amanatides P.G."/>
            <person name="Scherer S.E."/>
            <person name="Li P.W."/>
            <person name="Hoskins R.A."/>
            <person name="Galle R.F."/>
            <person name="George R.A."/>
            <person name="Lewis S.E."/>
            <person name="Richards S."/>
            <person name="Ashburner M."/>
            <person name="Henderson S.N."/>
            <person name="Sutton G.G."/>
            <person name="Wortman J.R."/>
            <person name="Yandell M.D."/>
            <person name="Zhang Q."/>
            <person name="Chen L.X."/>
            <person name="Brandon R.C."/>
            <person name="Rogers Y.-H.C."/>
            <person name="Blazej R.G."/>
            <person name="Champe M."/>
            <person name="Pfeiffer B.D."/>
            <person name="Wan K.H."/>
            <person name="Doyle C."/>
            <person name="Baxter E.G."/>
            <person name="Helt G."/>
            <person name="Nelson C.R."/>
            <person name="Miklos G.L.G."/>
            <person name="Abril J.F."/>
            <person name="Agbayani A."/>
            <person name="An H.-J."/>
            <person name="Andrews-Pfannkoch C."/>
            <person name="Baldwin D."/>
            <person name="Ballew R.M."/>
            <person name="Basu A."/>
            <person name="Baxendale J."/>
            <person name="Bayraktaroglu L."/>
            <person name="Beasley E.M."/>
            <person name="Beeson K.Y."/>
            <person name="Benos P.V."/>
            <person name="Berman B.P."/>
            <person name="Bhandari D."/>
            <person name="Bolshakov S."/>
            <person name="Borkova D."/>
            <person name="Botchan M.R."/>
            <person name="Bouck J."/>
            <person name="Brokstein P."/>
            <person name="Brottier P."/>
            <person name="Burtis K.C."/>
            <person name="Busam D.A."/>
            <person name="Butler H."/>
            <person name="Cadieu E."/>
            <person name="Center A."/>
            <person name="Chandra I."/>
            <person name="Cherry J.M."/>
            <person name="Cawley S."/>
            <person name="Dahlke C."/>
            <person name="Davenport L.B."/>
            <person name="Davies P."/>
            <person name="de Pablos B."/>
            <person name="Delcher A."/>
            <person name="Deng Z."/>
            <person name="Mays A.D."/>
            <person name="Dew I."/>
            <person name="Dietz S.M."/>
            <person name="Dodson K."/>
            <person name="Doup L.E."/>
            <person name="Downes M."/>
            <person name="Dugan-Rocha S."/>
            <person name="Dunkov B.C."/>
            <person name="Dunn P."/>
            <person name="Durbin K.J."/>
            <person name="Evangelista C.C."/>
            <person name="Ferraz C."/>
            <person name="Ferriera S."/>
            <person name="Fleischmann W."/>
            <person name="Fosler C."/>
            <person name="Gabrielian A.E."/>
            <person name="Garg N.S."/>
            <person name="Gelbart W.M."/>
            <person name="Glasser K."/>
            <person name="Glodek A."/>
            <person name="Gong F."/>
            <person name="Gorrell J.H."/>
            <person name="Gu Z."/>
            <person name="Guan P."/>
            <person name="Harris M."/>
            <person name="Harris N.L."/>
            <person name="Harvey D.A."/>
            <person name="Heiman T.J."/>
            <person name="Hernandez J.R."/>
            <person name="Houck J."/>
            <person name="Hostin D."/>
            <person name="Houston K.A."/>
            <person name="Howland T.J."/>
            <person name="Wei M.-H."/>
            <person name="Ibegwam C."/>
            <person name="Jalali M."/>
            <person name="Kalush F."/>
            <person name="Karpen G.H."/>
            <person name="Ke Z."/>
            <person name="Kennison J.A."/>
            <person name="Ketchum K.A."/>
            <person name="Kimmel B.E."/>
            <person name="Kodira C.D."/>
            <person name="Kraft C.L."/>
            <person name="Kravitz S."/>
            <person name="Kulp D."/>
            <person name="Lai Z."/>
            <person name="Lasko P."/>
            <person name="Lei Y."/>
            <person name="Levitsky A.A."/>
            <person name="Li J.H."/>
            <person name="Li Z."/>
            <person name="Liang Y."/>
            <person name="Lin X."/>
            <person name="Liu X."/>
            <person name="Mattei B."/>
            <person name="McIntosh T.C."/>
            <person name="McLeod M.P."/>
            <person name="McPherson D."/>
            <person name="Merkulov G."/>
            <person name="Milshina N.V."/>
            <person name="Mobarry C."/>
            <person name="Morris J."/>
            <person name="Moshrefi A."/>
            <person name="Mount S.M."/>
            <person name="Moy M."/>
            <person name="Murphy B."/>
            <person name="Murphy L."/>
            <person name="Muzny D.M."/>
            <person name="Nelson D.L."/>
            <person name="Nelson D.R."/>
            <person name="Nelson K.A."/>
            <person name="Nixon K."/>
            <person name="Nusskern D.R."/>
            <person name="Pacleb J.M."/>
            <person name="Palazzolo M."/>
            <person name="Pittman G.S."/>
            <person name="Pan S."/>
            <person name="Pollard J."/>
            <person name="Puri V."/>
            <person name="Reese M.G."/>
            <person name="Reinert K."/>
            <person name="Remington K."/>
            <person name="Saunders R.D.C."/>
            <person name="Scheeler F."/>
            <person name="Shen H."/>
            <person name="Shue B.C."/>
            <person name="Siden-Kiamos I."/>
            <person name="Simpson M."/>
            <person name="Skupski M.P."/>
            <person name="Smith T.J."/>
            <person name="Spier E."/>
            <person name="Spradling A.C."/>
            <person name="Stapleton M."/>
            <person name="Strong R."/>
            <person name="Sun E."/>
            <person name="Svirskas R."/>
            <person name="Tector C."/>
            <person name="Turner R."/>
            <person name="Venter E."/>
            <person name="Wang A.H."/>
            <person name="Wang X."/>
            <person name="Wang Z.-Y."/>
            <person name="Wassarman D.A."/>
            <person name="Weinstock G.M."/>
            <person name="Weissenbach J."/>
            <person name="Williams S.M."/>
            <person name="Woodage T."/>
            <person name="Worley K.C."/>
            <person name="Wu D."/>
            <person name="Yang S."/>
            <person name="Yao Q.A."/>
            <person name="Ye J."/>
            <person name="Yeh R.-F."/>
            <person name="Zaveri J.S."/>
            <person name="Zhan M."/>
            <person name="Zhang G."/>
            <person name="Zhao Q."/>
            <person name="Zheng L."/>
            <person name="Zheng X.H."/>
            <person name="Zhong F.N."/>
            <person name="Zhong W."/>
            <person name="Zhou X."/>
            <person name="Zhu S.C."/>
            <person name="Zhu X."/>
            <person name="Smith H.O."/>
            <person name="Gibbs R.A."/>
            <person name="Myers E.W."/>
            <person name="Rubin G.M."/>
            <person name="Venter J.C."/>
        </authorList>
    </citation>
    <scope>NUCLEOTIDE SEQUENCE [LARGE SCALE GENOMIC DNA]</scope>
    <source>
        <strain>Berkeley</strain>
    </source>
</reference>
<reference key="2">
    <citation type="journal article" date="2002" name="Genome Biol.">
        <title>Annotation of the Drosophila melanogaster euchromatic genome: a systematic review.</title>
        <authorList>
            <person name="Misra S."/>
            <person name="Crosby M.A."/>
            <person name="Mungall C.J."/>
            <person name="Matthews B.B."/>
            <person name="Campbell K.S."/>
            <person name="Hradecky P."/>
            <person name="Huang Y."/>
            <person name="Kaminker J.S."/>
            <person name="Millburn G.H."/>
            <person name="Prochnik S.E."/>
            <person name="Smith C.D."/>
            <person name="Tupy J.L."/>
            <person name="Whitfield E.J."/>
            <person name="Bayraktaroglu L."/>
            <person name="Berman B.P."/>
            <person name="Bettencourt B.R."/>
            <person name="Celniker S.E."/>
            <person name="de Grey A.D.N.J."/>
            <person name="Drysdale R.A."/>
            <person name="Harris N.L."/>
            <person name="Richter J."/>
            <person name="Russo S."/>
            <person name="Schroeder A.J."/>
            <person name="Shu S.Q."/>
            <person name="Stapleton M."/>
            <person name="Yamada C."/>
            <person name="Ashburner M."/>
            <person name="Gelbart W.M."/>
            <person name="Rubin G.M."/>
            <person name="Lewis S.E."/>
        </authorList>
    </citation>
    <scope>GENOME REANNOTATION</scope>
    <source>
        <strain>Berkeley</strain>
    </source>
</reference>
<reference key="3">
    <citation type="journal article" date="2002" name="Genome Biol.">
        <title>A Drosophila full-length cDNA resource.</title>
        <authorList>
            <person name="Stapleton M."/>
            <person name="Carlson J.W."/>
            <person name="Brokstein P."/>
            <person name="Yu C."/>
            <person name="Champe M."/>
            <person name="George R.A."/>
            <person name="Guarin H."/>
            <person name="Kronmiller B."/>
            <person name="Pacleb J.M."/>
            <person name="Park S."/>
            <person name="Wan K.H."/>
            <person name="Rubin G.M."/>
            <person name="Celniker S.E."/>
        </authorList>
    </citation>
    <scope>NUCLEOTIDE SEQUENCE [LARGE SCALE MRNA]</scope>
    <source>
        <strain>Berkeley</strain>
        <tissue>Testis</tissue>
    </source>
</reference>
<reference key="4">
    <citation type="submission" date="2009-03" db="EMBL/GenBank/DDBJ databases">
        <authorList>
            <person name="Carlson J.W."/>
            <person name="Booth B."/>
            <person name="Frise E."/>
            <person name="Park S."/>
            <person name="Wan K.H."/>
            <person name="Yu C."/>
            <person name="Celniker S.E."/>
        </authorList>
    </citation>
    <scope>NUCLEOTIDE SEQUENCE [LARGE SCALE MRNA]</scope>
    <source>
        <strain>Berkeley</strain>
    </source>
</reference>
<reference key="5">
    <citation type="journal article" date="2007" name="J. Biol. Chem.">
        <title>The essential Drosophila ATP-binding cassette domain protein, pixie, binds the 40 S ribosome in an ATP-dependent manner and is required for translation initiation.</title>
        <authorList>
            <person name="Andersen D.S."/>
            <person name="Leevers S.J."/>
        </authorList>
    </citation>
    <scope>INTERACTION WITH PIX</scope>
    <scope>ASSOCIATION WITH THE 40S RIBOSOME</scope>
</reference>
<reference key="6">
    <citation type="journal article" date="2013" name="Mol. Cell. Biol.">
        <title>Mextli is a novel eukaryotic translation initiation factor 4E-binding protein that promotes translation in Drosophila melanogaster.</title>
        <authorList>
            <person name="Hernandez G."/>
            <person name="Miron M."/>
            <person name="Han H."/>
            <person name="Liu N."/>
            <person name="Magescas J."/>
            <person name="Tettweiler G."/>
            <person name="Frank F."/>
            <person name="Siddiqui N."/>
            <person name="Sonenberg N."/>
            <person name="Lasko P."/>
        </authorList>
    </citation>
    <scope>INTERACTION WITH MXT</scope>
</reference>
<accession>Q0E940</accession>
<accession>C0PUW0</accession>
<accession>Q8MR84</accession>
<organism>
    <name type="scientific">Drosophila melanogaster</name>
    <name type="common">Fruit fly</name>
    <dbReference type="NCBI Taxonomy" id="7227"/>
    <lineage>
        <taxon>Eukaryota</taxon>
        <taxon>Metazoa</taxon>
        <taxon>Ecdysozoa</taxon>
        <taxon>Arthropoda</taxon>
        <taxon>Hexapoda</taxon>
        <taxon>Insecta</taxon>
        <taxon>Pterygota</taxon>
        <taxon>Neoptera</taxon>
        <taxon>Endopterygota</taxon>
        <taxon>Diptera</taxon>
        <taxon>Brachycera</taxon>
        <taxon>Muscomorpha</taxon>
        <taxon>Ephydroidea</taxon>
        <taxon>Drosophilidae</taxon>
        <taxon>Drosophila</taxon>
        <taxon>Sophophora</taxon>
    </lineage>
</organism>
<gene>
    <name evidence="1" type="primary">eIF3b</name>
    <name evidence="1" type="synonym">eIF3-S9</name>
    <name evidence="6" type="ORF">CG4878</name>
</gene>
<dbReference type="EMBL" id="AE013599">
    <property type="protein sequence ID" value="AAF57842.1"/>
    <property type="molecule type" value="Genomic_DNA"/>
</dbReference>
<dbReference type="EMBL" id="AY122066">
    <property type="protein sequence ID" value="AAM52578.1"/>
    <property type="molecule type" value="mRNA"/>
</dbReference>
<dbReference type="EMBL" id="BT072816">
    <property type="protein sequence ID" value="ACN62419.1"/>
    <property type="molecule type" value="mRNA"/>
</dbReference>
<dbReference type="RefSeq" id="NP_611228.1">
    <property type="nucleotide sequence ID" value="NM_137384.3"/>
</dbReference>
<dbReference type="RefSeq" id="NP_725691.1">
    <property type="nucleotide sequence ID" value="NM_166239.4"/>
</dbReference>
<dbReference type="SMR" id="Q0E940"/>
<dbReference type="BioGRID" id="62670">
    <property type="interactions" value="34"/>
</dbReference>
<dbReference type="FunCoup" id="Q0E940">
    <property type="interactions" value="2690"/>
</dbReference>
<dbReference type="IntAct" id="Q0E940">
    <property type="interactions" value="13"/>
</dbReference>
<dbReference type="STRING" id="7227.FBpp0086098"/>
<dbReference type="GlyGen" id="Q0E940">
    <property type="glycosylation" value="1 site"/>
</dbReference>
<dbReference type="PaxDb" id="7227-FBpp0086098"/>
<dbReference type="DNASU" id="36981"/>
<dbReference type="EnsemblMetazoa" id="FBtr0086941">
    <property type="protein sequence ID" value="FBpp0086097"/>
    <property type="gene ID" value="FBgn0034237"/>
</dbReference>
<dbReference type="EnsemblMetazoa" id="FBtr0086942">
    <property type="protein sequence ID" value="FBpp0086098"/>
    <property type="gene ID" value="FBgn0034237"/>
</dbReference>
<dbReference type="GeneID" id="36981"/>
<dbReference type="KEGG" id="dme:Dmel_CG4878"/>
<dbReference type="UCSC" id="CG4878-RA">
    <property type="organism name" value="d. melanogaster"/>
</dbReference>
<dbReference type="UCSC" id="CG4878-RB">
    <property type="organism name" value="d. melanogaster"/>
</dbReference>
<dbReference type="AGR" id="FB:FBgn0034237"/>
<dbReference type="CTD" id="8662"/>
<dbReference type="FlyBase" id="FBgn0034237">
    <property type="gene designation" value="eIF3b"/>
</dbReference>
<dbReference type="VEuPathDB" id="VectorBase:FBgn0034237"/>
<dbReference type="eggNOG" id="KOG2314">
    <property type="taxonomic scope" value="Eukaryota"/>
</dbReference>
<dbReference type="GeneTree" id="ENSGT00550000074913"/>
<dbReference type="HOGENOM" id="CLU_011152_1_0_1"/>
<dbReference type="InParanoid" id="Q0E940"/>
<dbReference type="OMA" id="LWGGPQF"/>
<dbReference type="OrthoDB" id="10250414at2759"/>
<dbReference type="PhylomeDB" id="Q0E940"/>
<dbReference type="Reactome" id="R-DME-156827">
    <property type="pathway name" value="L13a-mediated translational silencing of Ceruloplasmin expression"/>
</dbReference>
<dbReference type="Reactome" id="R-DME-72649">
    <property type="pathway name" value="Translation initiation complex formation"/>
</dbReference>
<dbReference type="Reactome" id="R-DME-72689">
    <property type="pathway name" value="Formation of a pool of free 40S subunits"/>
</dbReference>
<dbReference type="Reactome" id="R-DME-72695">
    <property type="pathway name" value="Formation of the ternary complex, and subsequently, the 43S complex"/>
</dbReference>
<dbReference type="Reactome" id="R-DME-72702">
    <property type="pathway name" value="Ribosomal scanning and start codon recognition"/>
</dbReference>
<dbReference type="SignaLink" id="Q0E940"/>
<dbReference type="BioGRID-ORCS" id="36981">
    <property type="hits" value="1 hit in 1 CRISPR screen"/>
</dbReference>
<dbReference type="GenomeRNAi" id="36981"/>
<dbReference type="PRO" id="PR:Q0E940"/>
<dbReference type="Proteomes" id="UP000000803">
    <property type="component" value="Chromosome 2R"/>
</dbReference>
<dbReference type="Bgee" id="FBgn0034237">
    <property type="expression patterns" value="Expressed in wing disc and 248 other cell types or tissues"/>
</dbReference>
<dbReference type="ExpressionAtlas" id="Q0E940">
    <property type="expression patterns" value="baseline and differential"/>
</dbReference>
<dbReference type="GO" id="GO:0005829">
    <property type="term" value="C:cytosol"/>
    <property type="evidence" value="ECO:0000250"/>
    <property type="project" value="FlyBase"/>
</dbReference>
<dbReference type="GO" id="GO:0016282">
    <property type="term" value="C:eukaryotic 43S preinitiation complex"/>
    <property type="evidence" value="ECO:0007669"/>
    <property type="project" value="UniProtKB-UniRule"/>
</dbReference>
<dbReference type="GO" id="GO:0033290">
    <property type="term" value="C:eukaryotic 48S preinitiation complex"/>
    <property type="evidence" value="ECO:0007669"/>
    <property type="project" value="UniProtKB-UniRule"/>
</dbReference>
<dbReference type="GO" id="GO:0005852">
    <property type="term" value="C:eukaryotic translation initiation factor 3 complex"/>
    <property type="evidence" value="ECO:0000250"/>
    <property type="project" value="UniProtKB"/>
</dbReference>
<dbReference type="GO" id="GO:0003729">
    <property type="term" value="F:mRNA binding"/>
    <property type="evidence" value="ECO:0000250"/>
    <property type="project" value="FlyBase"/>
</dbReference>
<dbReference type="GO" id="GO:0003743">
    <property type="term" value="F:translation initiation factor activity"/>
    <property type="evidence" value="ECO:0000250"/>
    <property type="project" value="UniProtKB"/>
</dbReference>
<dbReference type="GO" id="GO:0031369">
    <property type="term" value="F:translation initiation factor binding"/>
    <property type="evidence" value="ECO:0007669"/>
    <property type="project" value="InterPro"/>
</dbReference>
<dbReference type="GO" id="GO:0030707">
    <property type="term" value="P:follicle cell of egg chamber development"/>
    <property type="evidence" value="ECO:0000315"/>
    <property type="project" value="FlyBase"/>
</dbReference>
<dbReference type="GO" id="GO:0001732">
    <property type="term" value="P:formation of cytoplasmic translation initiation complex"/>
    <property type="evidence" value="ECO:0007669"/>
    <property type="project" value="UniProtKB-UniRule"/>
</dbReference>
<dbReference type="GO" id="GO:0006446">
    <property type="term" value="P:regulation of translational initiation"/>
    <property type="evidence" value="ECO:0000250"/>
    <property type="project" value="UniProtKB"/>
</dbReference>
<dbReference type="GO" id="GO:0006413">
    <property type="term" value="P:translational initiation"/>
    <property type="evidence" value="ECO:0000250"/>
    <property type="project" value="FlyBase"/>
</dbReference>
<dbReference type="CDD" id="cd12278">
    <property type="entry name" value="RRM_eIF3B"/>
    <property type="match status" value="1"/>
</dbReference>
<dbReference type="FunFam" id="2.130.10.10:FF:000884">
    <property type="entry name" value="Eukaryotic translation initiation factor 3 subunit B"/>
    <property type="match status" value="1"/>
</dbReference>
<dbReference type="FunFam" id="3.30.70.330:FF:000607">
    <property type="entry name" value="Eukaryotic translation initiation factor 3 subunit B"/>
    <property type="match status" value="1"/>
</dbReference>
<dbReference type="Gene3D" id="3.30.70.330">
    <property type="match status" value="1"/>
</dbReference>
<dbReference type="Gene3D" id="2.130.10.10">
    <property type="entry name" value="YVTN repeat-like/Quinoprotein amine dehydrogenase"/>
    <property type="match status" value="1"/>
</dbReference>
<dbReference type="HAMAP" id="MF_03001">
    <property type="entry name" value="eIF3b"/>
    <property type="match status" value="1"/>
</dbReference>
<dbReference type="InterPro" id="IPR011400">
    <property type="entry name" value="EIF3B"/>
</dbReference>
<dbReference type="InterPro" id="IPR034363">
    <property type="entry name" value="eIF3B_RRM"/>
</dbReference>
<dbReference type="InterPro" id="IPR012677">
    <property type="entry name" value="Nucleotide-bd_a/b_plait_sf"/>
</dbReference>
<dbReference type="InterPro" id="IPR035979">
    <property type="entry name" value="RBD_domain_sf"/>
</dbReference>
<dbReference type="InterPro" id="IPR000504">
    <property type="entry name" value="RRM_dom"/>
</dbReference>
<dbReference type="InterPro" id="IPR013979">
    <property type="entry name" value="TIF_beta_prop-like"/>
</dbReference>
<dbReference type="InterPro" id="IPR015943">
    <property type="entry name" value="WD40/YVTN_repeat-like_dom_sf"/>
</dbReference>
<dbReference type="PANTHER" id="PTHR14068">
    <property type="entry name" value="EUKARYOTIC TRANSLATION INITIATION FACTOR 3 EIF3 -RELATED"/>
    <property type="match status" value="1"/>
</dbReference>
<dbReference type="PANTHER" id="PTHR14068:SF0">
    <property type="entry name" value="EUKARYOTIC TRANSLATION INITIATION FACTOR 3 SUBUNIT B"/>
    <property type="match status" value="1"/>
</dbReference>
<dbReference type="Pfam" id="PF08662">
    <property type="entry name" value="eIF2A"/>
    <property type="match status" value="1"/>
</dbReference>
<dbReference type="Pfam" id="PF00076">
    <property type="entry name" value="RRM_1"/>
    <property type="match status" value="1"/>
</dbReference>
<dbReference type="PIRSF" id="PIRSF036424">
    <property type="entry name" value="eIF3b"/>
    <property type="match status" value="1"/>
</dbReference>
<dbReference type="SMART" id="SM00360">
    <property type="entry name" value="RRM"/>
    <property type="match status" value="1"/>
</dbReference>
<dbReference type="SUPFAM" id="SSF82171">
    <property type="entry name" value="DPP6 N-terminal domain-like"/>
    <property type="match status" value="1"/>
</dbReference>
<dbReference type="SUPFAM" id="SSF54928">
    <property type="entry name" value="RNA-binding domain, RBD"/>
    <property type="match status" value="1"/>
</dbReference>
<dbReference type="PROSITE" id="PS50102">
    <property type="entry name" value="RRM"/>
    <property type="match status" value="1"/>
</dbReference>
<feature type="chain" id="PRO_0000363797" description="Eukaryotic translation initiation factor 3 subunit B">
    <location>
        <begin position="1"/>
        <end position="690"/>
    </location>
</feature>
<feature type="domain" description="RRM" evidence="1">
    <location>
        <begin position="57"/>
        <end position="141"/>
    </location>
</feature>
<feature type="repeat" description="WD 1">
    <location>
        <begin position="207"/>
        <end position="246"/>
    </location>
</feature>
<feature type="repeat" description="WD 2">
    <location>
        <begin position="293"/>
        <end position="331"/>
    </location>
</feature>
<feature type="repeat" description="WD 3">
    <location>
        <begin position="334"/>
        <end position="369"/>
    </location>
</feature>
<feature type="repeat" description="WD 4">
    <location>
        <begin position="442"/>
        <end position="484"/>
    </location>
</feature>
<feature type="repeat" description="WD 5">
    <location>
        <begin position="530"/>
        <end position="575"/>
    </location>
</feature>
<feature type="region of interest" description="Disordered" evidence="2">
    <location>
        <begin position="1"/>
        <end position="33"/>
    </location>
</feature>
<feature type="coiled-coil region" evidence="1">
    <location>
        <begin position="595"/>
        <end position="645"/>
    </location>
</feature>
<feature type="compositionally biased region" description="Basic and acidic residues" evidence="2">
    <location>
        <begin position="1"/>
        <end position="11"/>
    </location>
</feature>
<feature type="compositionally biased region" description="Acidic residues" evidence="2">
    <location>
        <begin position="15"/>
        <end position="25"/>
    </location>
</feature>
<feature type="sequence conflict" description="In Ref. 3; AAM52578." evidence="5" ref="3">
    <original>T</original>
    <variation>A</variation>
    <location>
        <position position="12"/>
    </location>
</feature>
<sequence length="690" mass="80441">MAKKKSEEHSGTDANDSDYQEEPNFDDPPGFVDNISDEDLLGDMLAQRPSEADGVESVVVVDNIPKVEPVRLEKLKLVINKLFSNYGEIVNVVYPVDEEGKTKGYAFMEYKQARQAEEAVKKLNNHRLDKNHTFAVNLFTDFQKYENIPEKWEPPTVQTFKVQSDLYNFINDPDTYDQYCVAAETAPNCVQVGFWQNVLPEPFELETRERFTDTFVKWSPLGTYVVTFHKPGVAIWGGSSFQKIQKFPHPGTQFVEFSPCENYLVTYGPTPTGQKIIIWDIRTGAEKRSFVADGMSVLSMFRWSHDDKFVARMGENSIHIYETPSFYLLDLKSIKIPGIRGFSWSPTDNVIAYWVEEQNQIPARVTLMEIPKKREIRNKNLFHVADCKLHWQKSGDYLCVKVDRYSKLKKDKKDLDVKFLGMFYNFEIFHMREKEIPVDSVEIRELILAFAWEPVGNKFSIIHGETNSSNVSFYEVNKGVKPSLVKRLEKKSCTHLFWSPRGQFIVMANLTMGTFEFVDSTNDYIITASPDHFRASEVEWDPTGRYVVTGVSSWKVKEDTGFNMYTFQGRIIKRTILKNFVQFLWRPRPPTLLSEEKQKEIKKNLKKYYAAFEQKDRLRLTRASKELLEKRSQLRETFMEYRNKRIAEWAEQKSRRIMLRGHVDTDNLETDEVDEEIVEFLVKEEVTLLE</sequence>
<protein>
    <recommendedName>
        <fullName evidence="1">Eukaryotic translation initiation factor 3 subunit B</fullName>
        <shortName evidence="1">eIF3b</shortName>
    </recommendedName>
    <alternativeName>
        <fullName evidence="1">Eukaryotic translation initiation factor 3 subunit 9</fullName>
    </alternativeName>
</protein>